<name>TRPD_DICT6</name>
<comment type="function">
    <text evidence="1">Catalyzes the transfer of the phosphoribosyl group of 5-phosphorylribose-1-pyrophosphate (PRPP) to anthranilate to yield N-(5'-phosphoribosyl)-anthranilate (PRA).</text>
</comment>
<comment type="catalytic activity">
    <reaction evidence="1">
        <text>N-(5-phospho-beta-D-ribosyl)anthranilate + diphosphate = 5-phospho-alpha-D-ribose 1-diphosphate + anthranilate</text>
        <dbReference type="Rhea" id="RHEA:11768"/>
        <dbReference type="ChEBI" id="CHEBI:16567"/>
        <dbReference type="ChEBI" id="CHEBI:18277"/>
        <dbReference type="ChEBI" id="CHEBI:33019"/>
        <dbReference type="ChEBI" id="CHEBI:58017"/>
        <dbReference type="EC" id="2.4.2.18"/>
    </reaction>
</comment>
<comment type="cofactor">
    <cofactor evidence="1">
        <name>Mg(2+)</name>
        <dbReference type="ChEBI" id="CHEBI:18420"/>
    </cofactor>
    <text evidence="1">Binds 2 magnesium ions per monomer.</text>
</comment>
<comment type="pathway">
    <text evidence="1">Amino-acid biosynthesis; L-tryptophan biosynthesis; L-tryptophan from chorismate: step 2/5.</text>
</comment>
<comment type="subunit">
    <text evidence="1">Homodimer.</text>
</comment>
<comment type="similarity">
    <text evidence="1">Belongs to the anthranilate phosphoribosyltransferase family.</text>
</comment>
<dbReference type="EC" id="2.4.2.18" evidence="1"/>
<dbReference type="EMBL" id="CP001146">
    <property type="protein sequence ID" value="ACI18525.1"/>
    <property type="molecule type" value="Genomic_DNA"/>
</dbReference>
<dbReference type="RefSeq" id="WP_012547157.1">
    <property type="nucleotide sequence ID" value="NC_011297.1"/>
</dbReference>
<dbReference type="SMR" id="B5YD05"/>
<dbReference type="STRING" id="309799.DICTH_0531"/>
<dbReference type="PaxDb" id="309799-DICTH_0531"/>
<dbReference type="KEGG" id="dth:DICTH_0531"/>
<dbReference type="eggNOG" id="COG0547">
    <property type="taxonomic scope" value="Bacteria"/>
</dbReference>
<dbReference type="HOGENOM" id="CLU_034315_2_1_0"/>
<dbReference type="OrthoDB" id="9806430at2"/>
<dbReference type="UniPathway" id="UPA00035">
    <property type="reaction ID" value="UER00041"/>
</dbReference>
<dbReference type="Proteomes" id="UP000001733">
    <property type="component" value="Chromosome"/>
</dbReference>
<dbReference type="GO" id="GO:0005829">
    <property type="term" value="C:cytosol"/>
    <property type="evidence" value="ECO:0007669"/>
    <property type="project" value="TreeGrafter"/>
</dbReference>
<dbReference type="GO" id="GO:0004048">
    <property type="term" value="F:anthranilate phosphoribosyltransferase activity"/>
    <property type="evidence" value="ECO:0007669"/>
    <property type="project" value="UniProtKB-UniRule"/>
</dbReference>
<dbReference type="GO" id="GO:0000287">
    <property type="term" value="F:magnesium ion binding"/>
    <property type="evidence" value="ECO:0007669"/>
    <property type="project" value="UniProtKB-UniRule"/>
</dbReference>
<dbReference type="GO" id="GO:0000162">
    <property type="term" value="P:L-tryptophan biosynthetic process"/>
    <property type="evidence" value="ECO:0007669"/>
    <property type="project" value="UniProtKB-UniRule"/>
</dbReference>
<dbReference type="FunFam" id="3.40.1030.10:FF:000002">
    <property type="entry name" value="Anthranilate phosphoribosyltransferase"/>
    <property type="match status" value="1"/>
</dbReference>
<dbReference type="Gene3D" id="3.40.1030.10">
    <property type="entry name" value="Nucleoside phosphorylase/phosphoribosyltransferase catalytic domain"/>
    <property type="match status" value="1"/>
</dbReference>
<dbReference type="Gene3D" id="1.20.970.10">
    <property type="entry name" value="Transferase, Pyrimidine Nucleoside Phosphorylase, Chain C"/>
    <property type="match status" value="1"/>
</dbReference>
<dbReference type="HAMAP" id="MF_00211">
    <property type="entry name" value="TrpD"/>
    <property type="match status" value="1"/>
</dbReference>
<dbReference type="InterPro" id="IPR005940">
    <property type="entry name" value="Anthranilate_Pribosyl_Tfrase"/>
</dbReference>
<dbReference type="InterPro" id="IPR000312">
    <property type="entry name" value="Glycosyl_Trfase_fam3"/>
</dbReference>
<dbReference type="InterPro" id="IPR017459">
    <property type="entry name" value="Glycosyl_Trfase_fam3_N_dom"/>
</dbReference>
<dbReference type="InterPro" id="IPR036320">
    <property type="entry name" value="Glycosyl_Trfase_fam3_N_dom_sf"/>
</dbReference>
<dbReference type="InterPro" id="IPR035902">
    <property type="entry name" value="Nuc_phospho_transferase"/>
</dbReference>
<dbReference type="NCBIfam" id="TIGR01245">
    <property type="entry name" value="trpD"/>
    <property type="match status" value="1"/>
</dbReference>
<dbReference type="PANTHER" id="PTHR43285">
    <property type="entry name" value="ANTHRANILATE PHOSPHORIBOSYLTRANSFERASE"/>
    <property type="match status" value="1"/>
</dbReference>
<dbReference type="PANTHER" id="PTHR43285:SF2">
    <property type="entry name" value="ANTHRANILATE PHOSPHORIBOSYLTRANSFERASE"/>
    <property type="match status" value="1"/>
</dbReference>
<dbReference type="Pfam" id="PF02885">
    <property type="entry name" value="Glycos_trans_3N"/>
    <property type="match status" value="1"/>
</dbReference>
<dbReference type="Pfam" id="PF00591">
    <property type="entry name" value="Glycos_transf_3"/>
    <property type="match status" value="1"/>
</dbReference>
<dbReference type="SUPFAM" id="SSF52418">
    <property type="entry name" value="Nucleoside phosphorylase/phosphoribosyltransferase catalytic domain"/>
    <property type="match status" value="1"/>
</dbReference>
<dbReference type="SUPFAM" id="SSF47648">
    <property type="entry name" value="Nucleoside phosphorylase/phosphoribosyltransferase N-terminal domain"/>
    <property type="match status" value="1"/>
</dbReference>
<feature type="chain" id="PRO_1000099800" description="Anthranilate phosphoribosyltransferase">
    <location>
        <begin position="1"/>
        <end position="336"/>
    </location>
</feature>
<feature type="binding site" evidence="1">
    <location>
        <position position="79"/>
    </location>
    <ligand>
        <name>5-phospho-alpha-D-ribose 1-diphosphate</name>
        <dbReference type="ChEBI" id="CHEBI:58017"/>
    </ligand>
</feature>
<feature type="binding site" evidence="1">
    <location>
        <position position="79"/>
    </location>
    <ligand>
        <name>anthranilate</name>
        <dbReference type="ChEBI" id="CHEBI:16567"/>
        <label>1</label>
    </ligand>
</feature>
<feature type="binding site" evidence="1">
    <location>
        <begin position="82"/>
        <end position="83"/>
    </location>
    <ligand>
        <name>5-phospho-alpha-D-ribose 1-diphosphate</name>
        <dbReference type="ChEBI" id="CHEBI:58017"/>
    </ligand>
</feature>
<feature type="binding site" evidence="1">
    <location>
        <position position="87"/>
    </location>
    <ligand>
        <name>5-phospho-alpha-D-ribose 1-diphosphate</name>
        <dbReference type="ChEBI" id="CHEBI:58017"/>
    </ligand>
</feature>
<feature type="binding site" evidence="1">
    <location>
        <begin position="89"/>
        <end position="92"/>
    </location>
    <ligand>
        <name>5-phospho-alpha-D-ribose 1-diphosphate</name>
        <dbReference type="ChEBI" id="CHEBI:58017"/>
    </ligand>
</feature>
<feature type="binding site" evidence="1">
    <location>
        <position position="91"/>
    </location>
    <ligand>
        <name>Mg(2+)</name>
        <dbReference type="ChEBI" id="CHEBI:18420"/>
        <label>1</label>
    </ligand>
</feature>
<feature type="binding site" evidence="1">
    <location>
        <begin position="107"/>
        <end position="115"/>
    </location>
    <ligand>
        <name>5-phospho-alpha-D-ribose 1-diphosphate</name>
        <dbReference type="ChEBI" id="CHEBI:58017"/>
    </ligand>
</feature>
<feature type="binding site" evidence="1">
    <location>
        <position position="110"/>
    </location>
    <ligand>
        <name>anthranilate</name>
        <dbReference type="ChEBI" id="CHEBI:16567"/>
        <label>1</label>
    </ligand>
</feature>
<feature type="binding site" evidence="1">
    <location>
        <position position="119"/>
    </location>
    <ligand>
        <name>5-phospho-alpha-D-ribose 1-diphosphate</name>
        <dbReference type="ChEBI" id="CHEBI:58017"/>
    </ligand>
</feature>
<feature type="binding site" evidence="1">
    <location>
        <position position="165"/>
    </location>
    <ligand>
        <name>anthranilate</name>
        <dbReference type="ChEBI" id="CHEBI:16567"/>
        <label>2</label>
    </ligand>
</feature>
<feature type="binding site" evidence="1">
    <location>
        <position position="225"/>
    </location>
    <ligand>
        <name>Mg(2+)</name>
        <dbReference type="ChEBI" id="CHEBI:18420"/>
        <label>2</label>
    </ligand>
</feature>
<feature type="binding site" evidence="1">
    <location>
        <position position="226"/>
    </location>
    <ligand>
        <name>Mg(2+)</name>
        <dbReference type="ChEBI" id="CHEBI:18420"/>
        <label>1</label>
    </ligand>
</feature>
<feature type="binding site" evidence="1">
    <location>
        <position position="226"/>
    </location>
    <ligand>
        <name>Mg(2+)</name>
        <dbReference type="ChEBI" id="CHEBI:18420"/>
        <label>2</label>
    </ligand>
</feature>
<protein>
    <recommendedName>
        <fullName evidence="1">Anthranilate phosphoribosyltransferase</fullName>
        <ecNumber evidence="1">2.4.2.18</ecNumber>
    </recommendedName>
</protein>
<proteinExistence type="inferred from homology"/>
<sequence length="336" mass="36915">MVKEYLKKISEGKHLTFDEAKEIVLSIDREEITEAQLGAVLLGLRLKGENPEEIAGFVDVLHEKAKKIPNRTPAVDVCGTGGDKSNTFNISTAVAFTLASLGVRVAKHGNRAMSSKAGSIDVIEALGFKCSDNPEEIARDIDEKGIGIIFAPYFHPVVGKAVKVRRELGIGTIFNMAGPMLNPANLSGQILGVYSEKVMRNMAEASLILKKDNILFYHGKDDGIDEISLSGKTIFAYLKNGKIDYFDFSPEDIGIKRYQKEEFKGGDAQENAKILEDIFKGVAKESHIDIVAVNSAFALWVLGKVKSVKEGFDMVKEHIMKGKVYEFVETLRGRTA</sequence>
<gene>
    <name evidence="1" type="primary">trpD</name>
    <name type="ordered locus">DICTH_0531</name>
</gene>
<evidence type="ECO:0000255" key="1">
    <source>
        <dbReference type="HAMAP-Rule" id="MF_00211"/>
    </source>
</evidence>
<organism>
    <name type="scientific">Dictyoglomus thermophilum (strain ATCC 35947 / DSM 3960 / H-6-12)</name>
    <dbReference type="NCBI Taxonomy" id="309799"/>
    <lineage>
        <taxon>Bacteria</taxon>
        <taxon>Pseudomonadati</taxon>
        <taxon>Dictyoglomota</taxon>
        <taxon>Dictyoglomia</taxon>
        <taxon>Dictyoglomales</taxon>
        <taxon>Dictyoglomaceae</taxon>
        <taxon>Dictyoglomus</taxon>
    </lineage>
</organism>
<keyword id="KW-0028">Amino-acid biosynthesis</keyword>
<keyword id="KW-0057">Aromatic amino acid biosynthesis</keyword>
<keyword id="KW-0328">Glycosyltransferase</keyword>
<keyword id="KW-0460">Magnesium</keyword>
<keyword id="KW-0479">Metal-binding</keyword>
<keyword id="KW-0808">Transferase</keyword>
<keyword id="KW-0822">Tryptophan biosynthesis</keyword>
<reference key="1">
    <citation type="journal article" date="2014" name="Genome Announc.">
        <title>Complete Genome Sequence of the Extreme Thermophile Dictyoglomus thermophilum H-6-12.</title>
        <authorList>
            <person name="Coil D.A."/>
            <person name="Badger J.H."/>
            <person name="Forberger H.C."/>
            <person name="Riggs F."/>
            <person name="Madupu R."/>
            <person name="Fedorova N."/>
            <person name="Ward N."/>
            <person name="Robb F.T."/>
            <person name="Eisen J.A."/>
        </authorList>
    </citation>
    <scope>NUCLEOTIDE SEQUENCE [LARGE SCALE GENOMIC DNA]</scope>
    <source>
        <strain>ATCC 35947 / DSM 3960 / H-6-12</strain>
    </source>
</reference>
<accession>B5YD05</accession>